<comment type="function">
    <text evidence="1 2 3 4 5">Component of the transcription regulatory complex SAGA, a multiprotein complex that activates transcription by remodeling chromatin and mediating histone acetylation and deubiquitination (PubMed:20008933, PubMed:21764853, PubMed:24493646, PubMed:30559249). The SAGA complex predominantly acetylates histone H3 (PubMed:30559249). Involved in SAGA complex coactivator function but not essential for SAGA complex assembly, histone-modifying activity or chromosomal recruitment (PubMed:20008933). Required for oogenesis; involved in transcriptional activation (PubMed:34807910).</text>
</comment>
<comment type="subunit">
    <text evidence="1 2 3 4 5 8">Component of the Spt-Ada-Gcn5 acetyltransferase (SAGA) complex consisting of wda/Taf5L, Saf6, Taf9, Taf10b, Taf12, Ada1, Spt3, Spt7, Spt20, Sf3b3, Sf3b5, Nipped-A/Tra1, a histone acetyltransferase (HAT) module made up of Gcn5, Ada2b (Isoform B), Ada3 and Sgf29, and a deubiquitinase (DUB) module made up of not/nonstop, Sgf11 and e(y)2 tethered to SAGA by Atxn7; not essential for SAGA complex assembly, histone-modifying activity or chromosomal recruitment (PubMed:20008933, PubMed:21764853, PubMed:24493646, PubMed:30559249, PubMed:34807910). Interacts (via N-terminal histone-fold domain) with Taf9 (via N-terminal histone-fold domain); the interaction is probably direct (PubMed:20008933). Probably forms a histone-like heterooctamer structure with Taf9, Taf12 and Taf10b (Probable).</text>
</comment>
<comment type="subcellular location">
    <subcellularLocation>
        <location evidence="1 3">Nucleus</location>
    </subcellularLocation>
    <subcellularLocation>
        <location evidence="5">Chromosome</location>
    </subcellularLocation>
    <text evidence="5">As part of the SAGA complex associates with chromosomes near the transcriptional start site, matching the distribution of RNA polymerase II.</text>
</comment>
<comment type="developmental stage">
    <text evidence="2">Expressed in embryonic muscle and neuronal cells (at protein level).</text>
</comment>
<comment type="disruption phenotype">
    <text evidence="1 5">Larval lethal during 2nd instar stage (PubMed:20008933). RNAi-mediated knockdown in female germ line cells results in arrested oogenesis at stage 6-7 (PubMed:34807910).</text>
</comment>
<comment type="similarity">
    <text evidence="7">Belongs to the TAF6 family.</text>
</comment>
<name>SAF6_DROME</name>
<organism evidence="11">
    <name type="scientific">Drosophila melanogaster</name>
    <name type="common">Fruit fly</name>
    <dbReference type="NCBI Taxonomy" id="7227"/>
    <lineage>
        <taxon>Eukaryota</taxon>
        <taxon>Metazoa</taxon>
        <taxon>Ecdysozoa</taxon>
        <taxon>Arthropoda</taxon>
        <taxon>Hexapoda</taxon>
        <taxon>Insecta</taxon>
        <taxon>Pterygota</taxon>
        <taxon>Neoptera</taxon>
        <taxon>Endopterygota</taxon>
        <taxon>Diptera</taxon>
        <taxon>Brachycera</taxon>
        <taxon>Muscomorpha</taxon>
        <taxon>Ephydroidea</taxon>
        <taxon>Drosophilidae</taxon>
        <taxon>Drosophila</taxon>
        <taxon>Sophophora</taxon>
    </lineage>
</organism>
<accession>Q9VPT4</accession>
<accession>Q8T039</accession>
<gene>
    <name evidence="6 10" type="primary">Saf6</name>
    <name evidence="10" type="ORF">CG3883</name>
</gene>
<keyword id="KW-0158">Chromosome</keyword>
<keyword id="KW-0539">Nucleus</keyword>
<keyword id="KW-1185">Reference proteome</keyword>
<keyword id="KW-0804">Transcription</keyword>
<keyword id="KW-0805">Transcription regulation</keyword>
<feature type="chain" id="PRO_0000462575" description="SAGA factor-like TAF6">
    <location>
        <begin position="1"/>
        <end position="717"/>
    </location>
</feature>
<feature type="region of interest" description="Sufficient for interaction with Taf9" evidence="1">
    <location>
        <begin position="123"/>
        <end position="204"/>
    </location>
</feature>
<dbReference type="EMBL" id="AE014134">
    <property type="protein sequence ID" value="AAF51457.2"/>
    <property type="molecule type" value="Genomic_DNA"/>
</dbReference>
<dbReference type="EMBL" id="AY069583">
    <property type="protein sequence ID" value="AAL39728.1"/>
    <property type="molecule type" value="mRNA"/>
</dbReference>
<dbReference type="RefSeq" id="NP_608545.1">
    <property type="nucleotide sequence ID" value="NM_134701.4"/>
</dbReference>
<dbReference type="ComplexPortal" id="CPX-2644">
    <property type="entry name" value="SAGA complex"/>
</dbReference>
<dbReference type="FunCoup" id="Q9VPT4">
    <property type="interactions" value="217"/>
</dbReference>
<dbReference type="IntAct" id="Q9VPT4">
    <property type="interactions" value="2"/>
</dbReference>
<dbReference type="STRING" id="7227.FBpp0077705"/>
<dbReference type="PaxDb" id="7227-FBpp0077705"/>
<dbReference type="DNASU" id="33255"/>
<dbReference type="EnsemblMetazoa" id="FBtr0078041">
    <property type="protein sequence ID" value="FBpp0077705"/>
    <property type="gene ID" value="FBgn0031281"/>
</dbReference>
<dbReference type="GeneID" id="33255"/>
<dbReference type="UCSC" id="CG3883-RA">
    <property type="organism name" value="d. melanogaster"/>
</dbReference>
<dbReference type="AGR" id="FB:FBgn0031281"/>
<dbReference type="CTD" id="33255"/>
<dbReference type="FlyBase" id="FBgn0031281">
    <property type="gene designation" value="Saf6"/>
</dbReference>
<dbReference type="VEuPathDB" id="VectorBase:FBgn0031281"/>
<dbReference type="eggNOG" id="ENOG502T2JZ">
    <property type="taxonomic scope" value="Eukaryota"/>
</dbReference>
<dbReference type="InParanoid" id="Q9VPT4"/>
<dbReference type="OMA" id="DIYLYEW"/>
<dbReference type="OrthoDB" id="6621890at2759"/>
<dbReference type="BioGRID-ORCS" id="33255">
    <property type="hits" value="1 hit in 1 CRISPR screen"/>
</dbReference>
<dbReference type="Proteomes" id="UP000000803">
    <property type="component" value="Chromosome 2L"/>
</dbReference>
<dbReference type="Bgee" id="FBgn0031281">
    <property type="expression patterns" value="Expressed in adult enteroendocrine precursor cell in adult midgut (Drosophila) and 34 other cell types or tissues"/>
</dbReference>
<dbReference type="ExpressionAtlas" id="Q9VPT4">
    <property type="expression patterns" value="baseline and differential"/>
</dbReference>
<dbReference type="GO" id="GO:0005634">
    <property type="term" value="C:nucleus"/>
    <property type="evidence" value="ECO:0000314"/>
    <property type="project" value="FlyBase"/>
</dbReference>
<dbReference type="GO" id="GO:0000124">
    <property type="term" value="C:SAGA complex"/>
    <property type="evidence" value="ECO:0000314"/>
    <property type="project" value="FlyBase"/>
</dbReference>
<dbReference type="GO" id="GO:0070461">
    <property type="term" value="C:SAGA-type complex"/>
    <property type="evidence" value="ECO:0000314"/>
    <property type="project" value="FlyBase"/>
</dbReference>
<dbReference type="GO" id="GO:0046695">
    <property type="term" value="C:SLIK (SAGA-like) complex"/>
    <property type="evidence" value="ECO:0007669"/>
    <property type="project" value="InterPro"/>
</dbReference>
<dbReference type="GO" id="GO:0005669">
    <property type="term" value="C:transcription factor TFIID complex"/>
    <property type="evidence" value="ECO:0000318"/>
    <property type="project" value="GO_Central"/>
</dbReference>
<dbReference type="GO" id="GO:0046982">
    <property type="term" value="F:protein heterodimerization activity"/>
    <property type="evidence" value="ECO:0000353"/>
    <property type="project" value="FlyBase"/>
</dbReference>
<dbReference type="GO" id="GO:0016251">
    <property type="term" value="F:RNA polymerase II general transcription initiation factor activity"/>
    <property type="evidence" value="ECO:0007669"/>
    <property type="project" value="InterPro"/>
</dbReference>
<dbReference type="GO" id="GO:0003713">
    <property type="term" value="F:transcription coactivator activity"/>
    <property type="evidence" value="ECO:0000318"/>
    <property type="project" value="GO_Central"/>
</dbReference>
<dbReference type="GO" id="GO:0045944">
    <property type="term" value="P:positive regulation of transcription by RNA polymerase II"/>
    <property type="evidence" value="ECO:0000315"/>
    <property type="project" value="FlyBase"/>
</dbReference>
<dbReference type="GO" id="GO:0051123">
    <property type="term" value="P:RNA polymerase II preinitiation complex assembly"/>
    <property type="evidence" value="ECO:0000318"/>
    <property type="project" value="GO_Central"/>
</dbReference>
<dbReference type="CDD" id="cd22932">
    <property type="entry name" value="HFD_TAF6L"/>
    <property type="match status" value="1"/>
</dbReference>
<dbReference type="InterPro" id="IPR037796">
    <property type="entry name" value="TAF6"/>
</dbReference>
<dbReference type="PANTHER" id="PTHR10221">
    <property type="entry name" value="TRANSCRIPTION INITIATION FACTOR TFIID SUBUNIT 6"/>
    <property type="match status" value="1"/>
</dbReference>
<dbReference type="PANTHER" id="PTHR10221:SF9">
    <property type="entry name" value="TRANSCRIPTION INITIATION FACTOR TFIID SUBUNIT 6"/>
    <property type="match status" value="1"/>
</dbReference>
<protein>
    <recommendedName>
        <fullName evidence="6 10">SAGA factor-like TAF6</fullName>
    </recommendedName>
</protein>
<reference evidence="11" key="1">
    <citation type="journal article" date="2000" name="Science">
        <title>The genome sequence of Drosophila melanogaster.</title>
        <authorList>
            <person name="Adams M.D."/>
            <person name="Celniker S.E."/>
            <person name="Holt R.A."/>
            <person name="Evans C.A."/>
            <person name="Gocayne J.D."/>
            <person name="Amanatides P.G."/>
            <person name="Scherer S.E."/>
            <person name="Li P.W."/>
            <person name="Hoskins R.A."/>
            <person name="Galle R.F."/>
            <person name="George R.A."/>
            <person name="Lewis S.E."/>
            <person name="Richards S."/>
            <person name="Ashburner M."/>
            <person name="Henderson S.N."/>
            <person name="Sutton G.G."/>
            <person name="Wortman J.R."/>
            <person name="Yandell M.D."/>
            <person name="Zhang Q."/>
            <person name="Chen L.X."/>
            <person name="Brandon R.C."/>
            <person name="Rogers Y.-H.C."/>
            <person name="Blazej R.G."/>
            <person name="Champe M."/>
            <person name="Pfeiffer B.D."/>
            <person name="Wan K.H."/>
            <person name="Doyle C."/>
            <person name="Baxter E.G."/>
            <person name="Helt G."/>
            <person name="Nelson C.R."/>
            <person name="Miklos G.L.G."/>
            <person name="Abril J.F."/>
            <person name="Agbayani A."/>
            <person name="An H.-J."/>
            <person name="Andrews-Pfannkoch C."/>
            <person name="Baldwin D."/>
            <person name="Ballew R.M."/>
            <person name="Basu A."/>
            <person name="Baxendale J."/>
            <person name="Bayraktaroglu L."/>
            <person name="Beasley E.M."/>
            <person name="Beeson K.Y."/>
            <person name="Benos P.V."/>
            <person name="Berman B.P."/>
            <person name="Bhandari D."/>
            <person name="Bolshakov S."/>
            <person name="Borkova D."/>
            <person name="Botchan M.R."/>
            <person name="Bouck J."/>
            <person name="Brokstein P."/>
            <person name="Brottier P."/>
            <person name="Burtis K.C."/>
            <person name="Busam D.A."/>
            <person name="Butler H."/>
            <person name="Cadieu E."/>
            <person name="Center A."/>
            <person name="Chandra I."/>
            <person name="Cherry J.M."/>
            <person name="Cawley S."/>
            <person name="Dahlke C."/>
            <person name="Davenport L.B."/>
            <person name="Davies P."/>
            <person name="de Pablos B."/>
            <person name="Delcher A."/>
            <person name="Deng Z."/>
            <person name="Mays A.D."/>
            <person name="Dew I."/>
            <person name="Dietz S.M."/>
            <person name="Dodson K."/>
            <person name="Doup L.E."/>
            <person name="Downes M."/>
            <person name="Dugan-Rocha S."/>
            <person name="Dunkov B.C."/>
            <person name="Dunn P."/>
            <person name="Durbin K.J."/>
            <person name="Evangelista C.C."/>
            <person name="Ferraz C."/>
            <person name="Ferriera S."/>
            <person name="Fleischmann W."/>
            <person name="Fosler C."/>
            <person name="Gabrielian A.E."/>
            <person name="Garg N.S."/>
            <person name="Gelbart W.M."/>
            <person name="Glasser K."/>
            <person name="Glodek A."/>
            <person name="Gong F."/>
            <person name="Gorrell J.H."/>
            <person name="Gu Z."/>
            <person name="Guan P."/>
            <person name="Harris M."/>
            <person name="Harris N.L."/>
            <person name="Harvey D.A."/>
            <person name="Heiman T.J."/>
            <person name="Hernandez J.R."/>
            <person name="Houck J."/>
            <person name="Hostin D."/>
            <person name="Houston K.A."/>
            <person name="Howland T.J."/>
            <person name="Wei M.-H."/>
            <person name="Ibegwam C."/>
            <person name="Jalali M."/>
            <person name="Kalush F."/>
            <person name="Karpen G.H."/>
            <person name="Ke Z."/>
            <person name="Kennison J.A."/>
            <person name="Ketchum K.A."/>
            <person name="Kimmel B.E."/>
            <person name="Kodira C.D."/>
            <person name="Kraft C.L."/>
            <person name="Kravitz S."/>
            <person name="Kulp D."/>
            <person name="Lai Z."/>
            <person name="Lasko P."/>
            <person name="Lei Y."/>
            <person name="Levitsky A.A."/>
            <person name="Li J.H."/>
            <person name="Li Z."/>
            <person name="Liang Y."/>
            <person name="Lin X."/>
            <person name="Liu X."/>
            <person name="Mattei B."/>
            <person name="McIntosh T.C."/>
            <person name="McLeod M.P."/>
            <person name="McPherson D."/>
            <person name="Merkulov G."/>
            <person name="Milshina N.V."/>
            <person name="Mobarry C."/>
            <person name="Morris J."/>
            <person name="Moshrefi A."/>
            <person name="Mount S.M."/>
            <person name="Moy M."/>
            <person name="Murphy B."/>
            <person name="Murphy L."/>
            <person name="Muzny D.M."/>
            <person name="Nelson D.L."/>
            <person name="Nelson D.R."/>
            <person name="Nelson K.A."/>
            <person name="Nixon K."/>
            <person name="Nusskern D.R."/>
            <person name="Pacleb J.M."/>
            <person name="Palazzolo M."/>
            <person name="Pittman G.S."/>
            <person name="Pan S."/>
            <person name="Pollard J."/>
            <person name="Puri V."/>
            <person name="Reese M.G."/>
            <person name="Reinert K."/>
            <person name="Remington K."/>
            <person name="Saunders R.D.C."/>
            <person name="Scheeler F."/>
            <person name="Shen H."/>
            <person name="Shue B.C."/>
            <person name="Siden-Kiamos I."/>
            <person name="Simpson M."/>
            <person name="Skupski M.P."/>
            <person name="Smith T.J."/>
            <person name="Spier E."/>
            <person name="Spradling A.C."/>
            <person name="Stapleton M."/>
            <person name="Strong R."/>
            <person name="Sun E."/>
            <person name="Svirskas R."/>
            <person name="Tector C."/>
            <person name="Turner R."/>
            <person name="Venter E."/>
            <person name="Wang A.H."/>
            <person name="Wang X."/>
            <person name="Wang Z.-Y."/>
            <person name="Wassarman D.A."/>
            <person name="Weinstock G.M."/>
            <person name="Weissenbach J."/>
            <person name="Williams S.M."/>
            <person name="Woodage T."/>
            <person name="Worley K.C."/>
            <person name="Wu D."/>
            <person name="Yang S."/>
            <person name="Yao Q.A."/>
            <person name="Ye J."/>
            <person name="Yeh R.-F."/>
            <person name="Zaveri J.S."/>
            <person name="Zhan M."/>
            <person name="Zhang G."/>
            <person name="Zhao Q."/>
            <person name="Zheng L."/>
            <person name="Zheng X.H."/>
            <person name="Zhong F.N."/>
            <person name="Zhong W."/>
            <person name="Zhou X."/>
            <person name="Zhu S.C."/>
            <person name="Zhu X."/>
            <person name="Smith H.O."/>
            <person name="Gibbs R.A."/>
            <person name="Myers E.W."/>
            <person name="Rubin G.M."/>
            <person name="Venter J.C."/>
        </authorList>
    </citation>
    <scope>NUCLEOTIDE SEQUENCE [LARGE SCALE GENOMIC DNA]</scope>
    <source>
        <strain evidence="11">Berkeley</strain>
    </source>
</reference>
<reference evidence="11" key="2">
    <citation type="journal article" date="2002" name="Genome Biol.">
        <title>Annotation of the Drosophila melanogaster euchromatic genome: a systematic review.</title>
        <authorList>
            <person name="Misra S."/>
            <person name="Crosby M.A."/>
            <person name="Mungall C.J."/>
            <person name="Matthews B.B."/>
            <person name="Campbell K.S."/>
            <person name="Hradecky P."/>
            <person name="Huang Y."/>
            <person name="Kaminker J.S."/>
            <person name="Millburn G.H."/>
            <person name="Prochnik S.E."/>
            <person name="Smith C.D."/>
            <person name="Tupy J.L."/>
            <person name="Whitfield E.J."/>
            <person name="Bayraktaroglu L."/>
            <person name="Berman B.P."/>
            <person name="Bettencourt B.R."/>
            <person name="Celniker S.E."/>
            <person name="de Grey A.D.N.J."/>
            <person name="Drysdale R.A."/>
            <person name="Harris N.L."/>
            <person name="Richter J."/>
            <person name="Russo S."/>
            <person name="Schroeder A.J."/>
            <person name="Shu S.Q."/>
            <person name="Stapleton M."/>
            <person name="Yamada C."/>
            <person name="Ashburner M."/>
            <person name="Gelbart W.M."/>
            <person name="Rubin G.M."/>
            <person name="Lewis S.E."/>
        </authorList>
    </citation>
    <scope>GENOME REANNOTATION</scope>
    <source>
        <strain evidence="11">Berkeley</strain>
    </source>
</reference>
<reference evidence="9" key="3">
    <citation type="journal article" date="2002" name="Genome Biol.">
        <title>A Drosophila full-length cDNA resource.</title>
        <authorList>
            <person name="Stapleton M."/>
            <person name="Carlson J.W."/>
            <person name="Brokstein P."/>
            <person name="Yu C."/>
            <person name="Champe M."/>
            <person name="George R.A."/>
            <person name="Guarin H."/>
            <person name="Kronmiller B."/>
            <person name="Pacleb J.M."/>
            <person name="Park S."/>
            <person name="Wan K.H."/>
            <person name="Rubin G.M."/>
            <person name="Celniker S.E."/>
        </authorList>
    </citation>
    <scope>NUCLEOTIDE SEQUENCE [LARGE SCALE MRNA]</scope>
    <source>
        <strain evidence="9">Berkeley</strain>
        <tissue evidence="9">Embryo</tissue>
    </source>
</reference>
<reference evidence="7" key="4">
    <citation type="journal article" date="2009" name="Genes Dev.">
        <title>A novel histone fold domain-containing protein that replaces TAF6 in Drosophila SAGA is required for SAGA-dependent gene expression.</title>
        <authorList>
            <person name="Weake V.M."/>
            <person name="Swanson S.K."/>
            <person name="Mushegian A."/>
            <person name="Florens L."/>
            <person name="Washburn M.P."/>
            <person name="Abmayr S.M."/>
            <person name="Workman J.L."/>
        </authorList>
    </citation>
    <scope>FUNCTION</scope>
    <scope>IDENTIFICATION IN THE SAGA COMPLEX</scope>
    <scope>INTERACTION WITH TAF9</scope>
    <scope>SUBCELLULAR LOCATION</scope>
    <scope>DISRUPTION PHENOTYPE</scope>
    <scope>IDENTIFICATION BY MASS SPECTROMETRY</scope>
</reference>
<reference evidence="7" key="5">
    <citation type="journal article" date="2011" name="Genes Dev.">
        <title>Post-transcription initiation function of the ubiquitous SAGA complex in tissue-specific gene activation.</title>
        <authorList>
            <person name="Weake V.M."/>
            <person name="Dyer J.O."/>
            <person name="Seidel C."/>
            <person name="Box A."/>
            <person name="Swanson S.K."/>
            <person name="Peak A."/>
            <person name="Florens L."/>
            <person name="Washburn M.P."/>
            <person name="Abmayr S.M."/>
            <person name="Workman J.L."/>
        </authorList>
    </citation>
    <scope>FUNCTION</scope>
    <scope>IDENTIFICATION IN THE SAGA COMPLEX</scope>
    <scope>DEVELOPMENTAL STAGE</scope>
    <scope>IDENTIFICATION BY MASS SPECTROMETRY</scope>
</reference>
<reference evidence="7" key="6">
    <citation type="journal article" date="2014" name="Genes Dev.">
        <title>Loss of Drosophila Ataxin-7, a SAGA subunit, reduces H2B ubiquitination and leads to neural and retinal degeneration.</title>
        <authorList>
            <person name="Mohan R.D."/>
            <person name="Dialynas G."/>
            <person name="Weake V.M."/>
            <person name="Liu J."/>
            <person name="Martin-Brown S."/>
            <person name="Florens L."/>
            <person name="Washburn M.P."/>
            <person name="Workman J.L."/>
            <person name="Abmayr S.M."/>
        </authorList>
    </citation>
    <scope>FUNCTION</scope>
    <scope>IDENTIFICATION IN THE SAGA COMPLEX</scope>
    <scope>SUBCELLULAR LOCATION</scope>
    <scope>IDENTIFICATION BY MASS SPECTROMETRY</scope>
</reference>
<reference evidence="7" key="7">
    <citation type="journal article" date="2019" name="J. Cell Sci.">
        <title>The Drosophila Dbf4 ortholog Chiffon forms a complex with Gcn5 that is necessary for histone acetylation and viability.</title>
        <authorList>
            <person name="Torres-Zelada E.F."/>
            <person name="Stephenson R.E."/>
            <person name="Alpsoy A."/>
            <person name="Anderson B.D."/>
            <person name="Swanson S.K."/>
            <person name="Florens L."/>
            <person name="Dykhuizen E.C."/>
            <person name="Washburn M.P."/>
            <person name="Weake V.M."/>
        </authorList>
    </citation>
    <scope>FUNCTION</scope>
    <scope>IDENTIFICATION IN THE SAGA COMPLEX</scope>
    <scope>IDENTIFICATION BY MASS SPECTROMETRY</scope>
</reference>
<reference evidence="7" key="8">
    <citation type="journal article" date="2021" name="PLoS Genet.">
        <title>The SAGA core module is critical during Drosophila oogenesis and is broadly recruited to promoters.</title>
        <authorList>
            <person name="Soffers J.H.M."/>
            <person name="Alcantara S.G."/>
            <person name="Li X."/>
            <person name="Shao W."/>
            <person name="Seidel C.W."/>
            <person name="Li H."/>
            <person name="Zeitlinger J."/>
            <person name="Abmayr S.M."/>
            <person name="Workman J.L."/>
        </authorList>
    </citation>
    <scope>FUNCTION</scope>
    <scope>INTERACTION WITH GCN5</scope>
    <scope>SUBCELLULAR LOCATION</scope>
    <scope>DISRUPTION PHENOTYPE</scope>
</reference>
<proteinExistence type="evidence at protein level"/>
<evidence type="ECO:0000269" key="1">
    <source>
    </source>
</evidence>
<evidence type="ECO:0000269" key="2">
    <source>
    </source>
</evidence>
<evidence type="ECO:0000269" key="3">
    <source>
    </source>
</evidence>
<evidence type="ECO:0000269" key="4">
    <source>
    </source>
</evidence>
<evidence type="ECO:0000269" key="5">
    <source>
    </source>
</evidence>
<evidence type="ECO:0000303" key="6">
    <source>
    </source>
</evidence>
<evidence type="ECO:0000305" key="7"/>
<evidence type="ECO:0000305" key="8">
    <source>
    </source>
</evidence>
<evidence type="ECO:0000312" key="9">
    <source>
        <dbReference type="EMBL" id="AAL39728.1"/>
    </source>
</evidence>
<evidence type="ECO:0000312" key="10">
    <source>
        <dbReference type="FlyBase" id="FBgn0031281"/>
    </source>
</evidence>
<evidence type="ECO:0000312" key="11">
    <source>
        <dbReference type="Proteomes" id="UP000000803"/>
    </source>
</evidence>
<sequence>MKTSGASNTDELNKSSHSKVSKKSTKSRSKSAKLELTGKNSLSASASSSIASAVSGGVAVGSLPATPTHLNMVTTPTTPTSSLGNYNLFDASFAVAGSGGHGLAGGIAGAEASGNSSRMGHQKSYAGFDPRSIKIFWEQHDQTDVELSQDVCARLAEDASYKVWELINNVKIYSRHSGGVVTYDLVNEVLKDADVPPMLGAMDSDWDRIDYDGSFYFHSDKIFELSAEFQKEVNLCTPDDADFQSICPVEDKHMDQLRQCVQSLVTAALFADSKSQTAAVCHAFQTPLMGSIYRVIVSKMVQLLAFKQQDHLSQRCWRLLRACNYNATANHNACRPEYFNLAEVLVSQLMAPYETIKAPHVDPDPGQTTSIKMEFEEELKVEPDQCHNPETQENPEVMGVEKQEQEPQMFPGESTMEHTIYKLQSEEEELNPQPEAEHLSSYFACPVGNGLVDELCETIGQLASQSGYLHAECLFLIKRRLARFFEGRHVSSERDFRYISRAVRGLIALGEYAFREFIPYIYKLRVEEIPDSLWPDLAPAAIFLGGHDDVYLYEWLEYGCGAALQPFLVHYARAYEKMVTRRYVKAKQPAYRIESVPGVRRLEWSTLAAAMCHGDDPSKALKPKPTLCEAFPDLQSPNLQLNCAGNIRFKFAGCRPVLLKPKVATVPHSEDSPSSAANGGGGGGASSDILIAKRKLFKPLTNVRKWSPISGYHYLRI</sequence>